<keyword id="KW-1185">Reference proteome</keyword>
<organism>
    <name type="scientific">Avian infectious bronchitis virus (strain Beaudette)</name>
    <name type="common">IBV</name>
    <dbReference type="NCBI Taxonomy" id="11122"/>
    <lineage>
        <taxon>Viruses</taxon>
        <taxon>Riboviria</taxon>
        <taxon>Orthornavirae</taxon>
        <taxon>Pisuviricota</taxon>
        <taxon>Pisoniviricetes</taxon>
        <taxon>Nidovirales</taxon>
        <taxon>Cornidovirineae</taxon>
        <taxon>Coronaviridae</taxon>
        <taxon>Orthocoronavirinae</taxon>
        <taxon>Gammacoronavirus</taxon>
        <taxon>Igacovirus</taxon>
        <taxon>Avian coronavirus</taxon>
    </lineage>
</organism>
<dbReference type="EMBL" id="M95169">
    <property type="protein sequence ID" value="AAA70240.1"/>
    <property type="molecule type" value="Genomic_RNA"/>
</dbReference>
<dbReference type="EMBL" id="M25905">
    <property type="protein sequence ID" value="AAA46218.1"/>
    <property type="molecule type" value="Genomic_RNA"/>
</dbReference>
<dbReference type="EMBL" id="AY692454">
    <property type="protein sequence ID" value="AAV98211.1"/>
    <property type="molecule type" value="mRNA"/>
</dbReference>
<dbReference type="EMBL" id="DQ001338">
    <property type="protein sequence ID" value="AAY24428.1"/>
    <property type="molecule type" value="Genomic_RNA"/>
</dbReference>
<dbReference type="EMBL" id="DQ001339">
    <property type="protein sequence ID" value="AAY24438.1"/>
    <property type="molecule type" value="Genomic_RNA"/>
</dbReference>
<dbReference type="Proteomes" id="UP000006717">
    <property type="component" value="Segment"/>
</dbReference>
<dbReference type="Proteomes" id="UP000107149">
    <property type="component" value="Genome"/>
</dbReference>
<dbReference type="Proteomes" id="UP000180341">
    <property type="component" value="Genome"/>
</dbReference>
<dbReference type="Proteomes" id="UP000180342">
    <property type="component" value="Genome"/>
</dbReference>
<dbReference type="InterPro" id="IPR009404">
    <property type="entry name" value="Corona_5a"/>
</dbReference>
<dbReference type="Pfam" id="PF06336">
    <property type="entry name" value="Corona_5a"/>
    <property type="match status" value="1"/>
</dbReference>
<accession>Q89613</accession>
<accession>Q5MNY7</accession>
<organismHost>
    <name type="scientific">Gallus gallus</name>
    <name type="common">Chicken</name>
    <dbReference type="NCBI Taxonomy" id="9031"/>
</organismHost>
<sequence>MKWLTSFGRAVISCYKSLLLTQLRVLDRLILDHGLLRVLTCSRRVLLVQLDLVYRLAYTPTQSLA</sequence>
<name>NS5A_IBVB</name>
<proteinExistence type="predicted"/>
<feature type="chain" id="PRO_0000289890" description="Non-structural protein 5a">
    <location>
        <begin position="1"/>
        <end position="65"/>
    </location>
</feature>
<feature type="sequence variant" description="In strain: Isolate IBV-EP3, Isolate Vero cell-adapted and Isolate Vero cell-adapted p65.">
    <original>S</original>
    <variation>I</variation>
    <location>
        <position position="6"/>
    </location>
</feature>
<protein>
    <recommendedName>
        <fullName>Non-structural protein 5a</fullName>
        <shortName>ns5a</shortName>
    </recommendedName>
    <alternativeName>
        <fullName>Accessory protein 5a</fullName>
    </alternativeName>
</protein>
<gene>
    <name type="ORF">5a</name>
</gene>
<reference key="1">
    <citation type="journal article" date="1984" name="Gene">
        <title>Sequencing of coronavirus IBV genomic RNA: a 195-base open reading frame encoded by mRNA B.</title>
        <authorList>
            <person name="Boursnell M.E.G."/>
            <person name="Brown T.D.K."/>
        </authorList>
    </citation>
    <scope>NUCLEOTIDE SEQUENCE [GENOMIC RNA]</scope>
</reference>
<reference key="2">
    <citation type="journal article" date="1987" name="J. Gen. Virol.">
        <title>Completion of the sequence of the genome of the coronavirus avian infectious bronchitis virus.</title>
        <authorList>
            <person name="Boursnell M.E.G."/>
            <person name="Brown T.D.K."/>
            <person name="Foulds I.J."/>
            <person name="Green P.F."/>
            <person name="Tomley F.M."/>
            <person name="Binns M.M."/>
        </authorList>
    </citation>
    <scope>NUCLEOTIDE SEQUENCE [GENOMIC RNA]</scope>
</reference>
<reference key="3">
    <citation type="journal article" date="1984" name="Adv. Exp. Med. Biol.">
        <title>DNA sequencing studies of genomic cDNA clones of avian infectious bronchitis virus.</title>
        <authorList>
            <person name="Boursnell M.E.G."/>
            <person name="Brown T.D.K."/>
        </authorList>
    </citation>
    <scope>NUCLEOTIDE SEQUENCE [GENOMIC RNA]</scope>
</reference>
<reference key="4">
    <citation type="journal article" date="2005" name="Virology">
        <title>In vitro assembled, recombinant infectious bronchitis viruses demonstrate that the 5a open reading frame is not essential for replication.</title>
        <authorList>
            <person name="Youn S."/>
            <person name="Leibowitz J.L."/>
            <person name="Collisson E.W."/>
        </authorList>
    </citation>
    <scope>NUCLEOTIDE SEQUENCE [MRNA]</scope>
    <source>
        <strain>Isolate Vero cell-adapted</strain>
    </source>
</reference>
<reference key="5">
    <citation type="journal article" date="2005" name="Biochem. Biophys. Res. Commun.">
        <title>Selection of and recombination between minor variants lead to the adaptation of an avian coronavirus to primate cells.</title>
        <authorList>
            <person name="Fang S.G."/>
            <person name="Shen S."/>
            <person name="Tay F.P."/>
            <person name="Liu D.X."/>
        </authorList>
    </citation>
    <scope>NUCLEOTIDE SEQUENCE [GENOMIC RNA]</scope>
    <source>
        <strain>Isolate IBV-EP3</strain>
        <strain>Isolate Vero cell-adapted p65</strain>
    </source>
</reference>